<evidence type="ECO:0000250" key="1">
    <source>
        <dbReference type="UniProtKB" id="Q9KNM4"/>
    </source>
</evidence>
<evidence type="ECO:0000250" key="2">
    <source>
        <dbReference type="UniProtKB" id="Q9KTX4"/>
    </source>
</evidence>
<evidence type="ECO:0000255" key="3">
    <source>
        <dbReference type="HAMAP-Rule" id="MF_00451"/>
    </source>
</evidence>
<keyword id="KW-0067">ATP-binding</keyword>
<keyword id="KW-0963">Cytoplasm</keyword>
<keyword id="KW-0418">Kinase</keyword>
<keyword id="KW-0460">Magnesium</keyword>
<keyword id="KW-0479">Metal-binding</keyword>
<keyword id="KW-0546">Nucleotide metabolism</keyword>
<keyword id="KW-0547">Nucleotide-binding</keyword>
<keyword id="KW-0597">Phosphoprotein</keyword>
<keyword id="KW-1185">Reference proteome</keyword>
<keyword id="KW-0808">Transferase</keyword>
<name>NDK_SYNS9</name>
<proteinExistence type="inferred from homology"/>
<protein>
    <recommendedName>
        <fullName evidence="3">Nucleoside diphosphate kinase</fullName>
        <shortName evidence="3">NDK</shortName>
        <shortName evidence="3">NDP kinase</shortName>
        <ecNumber evidence="3">2.7.4.6</ecNumber>
    </recommendedName>
    <alternativeName>
        <fullName evidence="3">Nucleoside-2-P kinase</fullName>
    </alternativeName>
</protein>
<accession>Q3AVV5</accession>
<organism>
    <name type="scientific">Synechococcus sp. (strain CC9902)</name>
    <dbReference type="NCBI Taxonomy" id="316279"/>
    <lineage>
        <taxon>Bacteria</taxon>
        <taxon>Bacillati</taxon>
        <taxon>Cyanobacteriota</taxon>
        <taxon>Cyanophyceae</taxon>
        <taxon>Synechococcales</taxon>
        <taxon>Synechococcaceae</taxon>
        <taxon>Synechococcus</taxon>
    </lineage>
</organism>
<gene>
    <name evidence="3" type="primary">ndk</name>
    <name type="ordered locus">Syncc9902_2171</name>
</gene>
<reference key="1">
    <citation type="submission" date="2005-08" db="EMBL/GenBank/DDBJ databases">
        <title>Complete sequence of Synechococcus sp. CC9902.</title>
        <authorList>
            <person name="Copeland A."/>
            <person name="Lucas S."/>
            <person name="Lapidus A."/>
            <person name="Barry K."/>
            <person name="Detter J.C."/>
            <person name="Glavina T."/>
            <person name="Hammon N."/>
            <person name="Israni S."/>
            <person name="Pitluck S."/>
            <person name="Martinez M."/>
            <person name="Schmutz J."/>
            <person name="Larimer F."/>
            <person name="Land M."/>
            <person name="Kyrpides N."/>
            <person name="Ivanova N."/>
            <person name="Richardson P."/>
        </authorList>
    </citation>
    <scope>NUCLEOTIDE SEQUENCE [LARGE SCALE GENOMIC DNA]</scope>
    <source>
        <strain>CC9902</strain>
    </source>
</reference>
<feature type="chain" id="PRO_0000242520" description="Nucleoside diphosphate kinase">
    <location>
        <begin position="1"/>
        <end position="151"/>
    </location>
</feature>
<feature type="active site" description="Pros-phosphohistidine intermediate" evidence="3">
    <location>
        <position position="116"/>
    </location>
</feature>
<feature type="binding site" evidence="3">
    <location>
        <position position="10"/>
    </location>
    <ligand>
        <name>ATP</name>
        <dbReference type="ChEBI" id="CHEBI:30616"/>
    </ligand>
</feature>
<feature type="binding site" evidence="3">
    <location>
        <position position="58"/>
    </location>
    <ligand>
        <name>ATP</name>
        <dbReference type="ChEBI" id="CHEBI:30616"/>
    </ligand>
</feature>
<feature type="binding site" evidence="3">
    <location>
        <position position="86"/>
    </location>
    <ligand>
        <name>ATP</name>
        <dbReference type="ChEBI" id="CHEBI:30616"/>
    </ligand>
</feature>
<feature type="binding site" evidence="3">
    <location>
        <position position="92"/>
    </location>
    <ligand>
        <name>ATP</name>
        <dbReference type="ChEBI" id="CHEBI:30616"/>
    </ligand>
</feature>
<feature type="binding site" evidence="3">
    <location>
        <position position="103"/>
    </location>
    <ligand>
        <name>ATP</name>
        <dbReference type="ChEBI" id="CHEBI:30616"/>
    </ligand>
</feature>
<feature type="binding site" evidence="3">
    <location>
        <position position="113"/>
    </location>
    <ligand>
        <name>ATP</name>
        <dbReference type="ChEBI" id="CHEBI:30616"/>
    </ligand>
</feature>
<comment type="function">
    <text evidence="3">Major role in the synthesis of nucleoside triphosphates other than ATP. The ATP gamma phosphate is transferred to the NDP beta phosphate via a ping-pong mechanism, using a phosphorylated active-site intermediate.</text>
</comment>
<comment type="function">
    <text evidence="1">(Microbial infection) Catalyzes the phosphorylation of dZDP to dZTP, when the bacterium is infected by a phage that produces the substrate for the synthesis of dZTP (2- amino-2'-deoxyadenosine 5'-triphosphate), which is then used by the phage as a DNA polymerase substrate.</text>
</comment>
<comment type="catalytic activity">
    <reaction evidence="2">
        <text>dZDP + ATP = dZTP + ADP</text>
        <dbReference type="Rhea" id="RHEA:67644"/>
        <dbReference type="ChEBI" id="CHEBI:30616"/>
        <dbReference type="ChEBI" id="CHEBI:172929"/>
        <dbReference type="ChEBI" id="CHEBI:172931"/>
        <dbReference type="ChEBI" id="CHEBI:456216"/>
    </reaction>
</comment>
<comment type="catalytic activity">
    <reaction evidence="3">
        <text>a 2'-deoxyribonucleoside 5'-diphosphate + ATP = a 2'-deoxyribonucleoside 5'-triphosphate + ADP</text>
        <dbReference type="Rhea" id="RHEA:44640"/>
        <dbReference type="ChEBI" id="CHEBI:30616"/>
        <dbReference type="ChEBI" id="CHEBI:61560"/>
        <dbReference type="ChEBI" id="CHEBI:73316"/>
        <dbReference type="ChEBI" id="CHEBI:456216"/>
        <dbReference type="EC" id="2.7.4.6"/>
    </reaction>
</comment>
<comment type="catalytic activity">
    <reaction evidence="3">
        <text>a ribonucleoside 5'-diphosphate + ATP = a ribonucleoside 5'-triphosphate + ADP</text>
        <dbReference type="Rhea" id="RHEA:18113"/>
        <dbReference type="ChEBI" id="CHEBI:30616"/>
        <dbReference type="ChEBI" id="CHEBI:57930"/>
        <dbReference type="ChEBI" id="CHEBI:61557"/>
        <dbReference type="ChEBI" id="CHEBI:456216"/>
        <dbReference type="EC" id="2.7.4.6"/>
    </reaction>
</comment>
<comment type="cofactor">
    <cofactor evidence="3">
        <name>Mg(2+)</name>
        <dbReference type="ChEBI" id="CHEBI:18420"/>
    </cofactor>
</comment>
<comment type="pathway">
    <text evidence="2">Purine metabolism.</text>
</comment>
<comment type="subunit">
    <text evidence="3">Homotetramer.</text>
</comment>
<comment type="subcellular location">
    <subcellularLocation>
        <location evidence="3">Cytoplasm</location>
    </subcellularLocation>
</comment>
<comment type="similarity">
    <text evidence="3">Belongs to the NDK family.</text>
</comment>
<dbReference type="EC" id="2.7.4.6" evidence="3"/>
<dbReference type="EMBL" id="CP000097">
    <property type="protein sequence ID" value="ABB27129.1"/>
    <property type="molecule type" value="Genomic_DNA"/>
</dbReference>
<dbReference type="RefSeq" id="WP_009788698.1">
    <property type="nucleotide sequence ID" value="NC_007513.1"/>
</dbReference>
<dbReference type="SMR" id="Q3AVV5"/>
<dbReference type="STRING" id="316279.Syncc9902_2171"/>
<dbReference type="KEGG" id="sye:Syncc9902_2171"/>
<dbReference type="eggNOG" id="COG0105">
    <property type="taxonomic scope" value="Bacteria"/>
</dbReference>
<dbReference type="HOGENOM" id="CLU_060216_6_3_3"/>
<dbReference type="OrthoDB" id="9801161at2"/>
<dbReference type="Proteomes" id="UP000002712">
    <property type="component" value="Chromosome"/>
</dbReference>
<dbReference type="GO" id="GO:0005737">
    <property type="term" value="C:cytoplasm"/>
    <property type="evidence" value="ECO:0007669"/>
    <property type="project" value="UniProtKB-SubCell"/>
</dbReference>
<dbReference type="GO" id="GO:0005524">
    <property type="term" value="F:ATP binding"/>
    <property type="evidence" value="ECO:0007669"/>
    <property type="project" value="UniProtKB-UniRule"/>
</dbReference>
<dbReference type="GO" id="GO:0046872">
    <property type="term" value="F:metal ion binding"/>
    <property type="evidence" value="ECO:0007669"/>
    <property type="project" value="UniProtKB-KW"/>
</dbReference>
<dbReference type="GO" id="GO:0004550">
    <property type="term" value="F:nucleoside diphosphate kinase activity"/>
    <property type="evidence" value="ECO:0007669"/>
    <property type="project" value="UniProtKB-UniRule"/>
</dbReference>
<dbReference type="GO" id="GO:0006241">
    <property type="term" value="P:CTP biosynthetic process"/>
    <property type="evidence" value="ECO:0007669"/>
    <property type="project" value="UniProtKB-UniRule"/>
</dbReference>
<dbReference type="GO" id="GO:0006183">
    <property type="term" value="P:GTP biosynthetic process"/>
    <property type="evidence" value="ECO:0007669"/>
    <property type="project" value="UniProtKB-UniRule"/>
</dbReference>
<dbReference type="GO" id="GO:0006228">
    <property type="term" value="P:UTP biosynthetic process"/>
    <property type="evidence" value="ECO:0007669"/>
    <property type="project" value="UniProtKB-UniRule"/>
</dbReference>
<dbReference type="CDD" id="cd04413">
    <property type="entry name" value="NDPk_I"/>
    <property type="match status" value="1"/>
</dbReference>
<dbReference type="FunFam" id="3.30.70.141:FF:000002">
    <property type="entry name" value="Nucleoside diphosphate kinase"/>
    <property type="match status" value="1"/>
</dbReference>
<dbReference type="Gene3D" id="3.30.70.141">
    <property type="entry name" value="Nucleoside diphosphate kinase-like domain"/>
    <property type="match status" value="1"/>
</dbReference>
<dbReference type="HAMAP" id="MF_00451">
    <property type="entry name" value="NDP_kinase"/>
    <property type="match status" value="1"/>
</dbReference>
<dbReference type="InterPro" id="IPR034907">
    <property type="entry name" value="NDK-like_dom"/>
</dbReference>
<dbReference type="InterPro" id="IPR036850">
    <property type="entry name" value="NDK-like_dom_sf"/>
</dbReference>
<dbReference type="InterPro" id="IPR001564">
    <property type="entry name" value="Nucleoside_diP_kinase"/>
</dbReference>
<dbReference type="InterPro" id="IPR023005">
    <property type="entry name" value="Nucleoside_diP_kinase_AS"/>
</dbReference>
<dbReference type="NCBIfam" id="NF001908">
    <property type="entry name" value="PRK00668.1"/>
    <property type="match status" value="1"/>
</dbReference>
<dbReference type="PANTHER" id="PTHR11349">
    <property type="entry name" value="NUCLEOSIDE DIPHOSPHATE KINASE"/>
    <property type="match status" value="1"/>
</dbReference>
<dbReference type="Pfam" id="PF00334">
    <property type="entry name" value="NDK"/>
    <property type="match status" value="1"/>
</dbReference>
<dbReference type="PRINTS" id="PR01243">
    <property type="entry name" value="NUCDPKINASE"/>
</dbReference>
<dbReference type="SMART" id="SM00562">
    <property type="entry name" value="NDK"/>
    <property type="match status" value="1"/>
</dbReference>
<dbReference type="SUPFAM" id="SSF54919">
    <property type="entry name" value="Nucleoside diphosphate kinase, NDK"/>
    <property type="match status" value="1"/>
</dbReference>
<dbReference type="PROSITE" id="PS00469">
    <property type="entry name" value="NDPK"/>
    <property type="match status" value="1"/>
</dbReference>
<dbReference type="PROSITE" id="PS51374">
    <property type="entry name" value="NDPK_LIKE"/>
    <property type="match status" value="1"/>
</dbReference>
<sequence>MAERTFVAIKPDGVQRGLVGEILGRFERKGFKLVGLKQITPSRALAEEHYGVHKERPFFAGLVGFITSGPVVAMVWEGDGVIASARKLIGATKPLESEPGTIRGDLAVNIGRNVIHGSDAPETAEFEIGLWFQPSELNDWSPSDQAWRVED</sequence>